<evidence type="ECO:0000250" key="1"/>
<evidence type="ECO:0000250" key="2">
    <source>
        <dbReference type="UniProtKB" id="Q8VD48"/>
    </source>
</evidence>
<evidence type="ECO:0000250" key="3">
    <source>
        <dbReference type="UniProtKB" id="Q9BPW9"/>
    </source>
</evidence>
<evidence type="ECO:0000255" key="4"/>
<evidence type="ECO:0000305" key="5"/>
<reference key="1">
    <citation type="journal article" date="2000" name="Methods Enzymol.">
        <title>Short-chain dehydrogenases/reductases in retina.</title>
        <authorList>
            <person name="Haeseleer F."/>
            <person name="Palczewski K."/>
        </authorList>
    </citation>
    <scope>NUCLEOTIDE SEQUENCE [MRNA]</scope>
    <source>
        <tissue>Eye</tissue>
    </source>
</reference>
<reference key="2">
    <citation type="submission" date="2005-02" db="EMBL/GenBank/DDBJ databases">
        <title>Mouse homolog of rat epithelial retinol dehydrogenase.</title>
        <authorList>
            <person name="Plumley H.C."/>
            <person name="Rexer B.N."/>
            <person name="Li X.-H."/>
            <person name="Ong D.E."/>
        </authorList>
    </citation>
    <scope>NUCLEOTIDE SEQUENCE [MRNA]</scope>
    <source>
        <strain>BALB/cJ</strain>
        <tissue>Uterus</tissue>
    </source>
</reference>
<reference key="3">
    <citation type="journal article" date="2005" name="Science">
        <title>The transcriptional landscape of the mammalian genome.</title>
        <authorList>
            <person name="Carninci P."/>
            <person name="Kasukawa T."/>
            <person name="Katayama S."/>
            <person name="Gough J."/>
            <person name="Frith M.C."/>
            <person name="Maeda N."/>
            <person name="Oyama R."/>
            <person name="Ravasi T."/>
            <person name="Lenhard B."/>
            <person name="Wells C."/>
            <person name="Kodzius R."/>
            <person name="Shimokawa K."/>
            <person name="Bajic V.B."/>
            <person name="Brenner S.E."/>
            <person name="Batalov S."/>
            <person name="Forrest A.R."/>
            <person name="Zavolan M."/>
            <person name="Davis M.J."/>
            <person name="Wilming L.G."/>
            <person name="Aidinis V."/>
            <person name="Allen J.E."/>
            <person name="Ambesi-Impiombato A."/>
            <person name="Apweiler R."/>
            <person name="Aturaliya R.N."/>
            <person name="Bailey T.L."/>
            <person name="Bansal M."/>
            <person name="Baxter L."/>
            <person name="Beisel K.W."/>
            <person name="Bersano T."/>
            <person name="Bono H."/>
            <person name="Chalk A.M."/>
            <person name="Chiu K.P."/>
            <person name="Choudhary V."/>
            <person name="Christoffels A."/>
            <person name="Clutterbuck D.R."/>
            <person name="Crowe M.L."/>
            <person name="Dalla E."/>
            <person name="Dalrymple B.P."/>
            <person name="de Bono B."/>
            <person name="Della Gatta G."/>
            <person name="di Bernardo D."/>
            <person name="Down T."/>
            <person name="Engstrom P."/>
            <person name="Fagiolini M."/>
            <person name="Faulkner G."/>
            <person name="Fletcher C.F."/>
            <person name="Fukushima T."/>
            <person name="Furuno M."/>
            <person name="Futaki S."/>
            <person name="Gariboldi M."/>
            <person name="Georgii-Hemming P."/>
            <person name="Gingeras T.R."/>
            <person name="Gojobori T."/>
            <person name="Green R.E."/>
            <person name="Gustincich S."/>
            <person name="Harbers M."/>
            <person name="Hayashi Y."/>
            <person name="Hensch T.K."/>
            <person name="Hirokawa N."/>
            <person name="Hill D."/>
            <person name="Huminiecki L."/>
            <person name="Iacono M."/>
            <person name="Ikeo K."/>
            <person name="Iwama A."/>
            <person name="Ishikawa T."/>
            <person name="Jakt M."/>
            <person name="Kanapin A."/>
            <person name="Katoh M."/>
            <person name="Kawasawa Y."/>
            <person name="Kelso J."/>
            <person name="Kitamura H."/>
            <person name="Kitano H."/>
            <person name="Kollias G."/>
            <person name="Krishnan S.P."/>
            <person name="Kruger A."/>
            <person name="Kummerfeld S.K."/>
            <person name="Kurochkin I.V."/>
            <person name="Lareau L.F."/>
            <person name="Lazarevic D."/>
            <person name="Lipovich L."/>
            <person name="Liu J."/>
            <person name="Liuni S."/>
            <person name="McWilliam S."/>
            <person name="Madan Babu M."/>
            <person name="Madera M."/>
            <person name="Marchionni L."/>
            <person name="Matsuda H."/>
            <person name="Matsuzawa S."/>
            <person name="Miki H."/>
            <person name="Mignone F."/>
            <person name="Miyake S."/>
            <person name="Morris K."/>
            <person name="Mottagui-Tabar S."/>
            <person name="Mulder N."/>
            <person name="Nakano N."/>
            <person name="Nakauchi H."/>
            <person name="Ng P."/>
            <person name="Nilsson R."/>
            <person name="Nishiguchi S."/>
            <person name="Nishikawa S."/>
            <person name="Nori F."/>
            <person name="Ohara O."/>
            <person name="Okazaki Y."/>
            <person name="Orlando V."/>
            <person name="Pang K.C."/>
            <person name="Pavan W.J."/>
            <person name="Pavesi G."/>
            <person name="Pesole G."/>
            <person name="Petrovsky N."/>
            <person name="Piazza S."/>
            <person name="Reed J."/>
            <person name="Reid J.F."/>
            <person name="Ring B.Z."/>
            <person name="Ringwald M."/>
            <person name="Rost B."/>
            <person name="Ruan Y."/>
            <person name="Salzberg S.L."/>
            <person name="Sandelin A."/>
            <person name="Schneider C."/>
            <person name="Schoenbach C."/>
            <person name="Sekiguchi K."/>
            <person name="Semple C.A."/>
            <person name="Seno S."/>
            <person name="Sessa L."/>
            <person name="Sheng Y."/>
            <person name="Shibata Y."/>
            <person name="Shimada H."/>
            <person name="Shimada K."/>
            <person name="Silva D."/>
            <person name="Sinclair B."/>
            <person name="Sperling S."/>
            <person name="Stupka E."/>
            <person name="Sugiura K."/>
            <person name="Sultana R."/>
            <person name="Takenaka Y."/>
            <person name="Taki K."/>
            <person name="Tammoja K."/>
            <person name="Tan S.L."/>
            <person name="Tang S."/>
            <person name="Taylor M.S."/>
            <person name="Tegner J."/>
            <person name="Teichmann S.A."/>
            <person name="Ueda H.R."/>
            <person name="van Nimwegen E."/>
            <person name="Verardo R."/>
            <person name="Wei C.L."/>
            <person name="Yagi K."/>
            <person name="Yamanishi H."/>
            <person name="Zabarovsky E."/>
            <person name="Zhu S."/>
            <person name="Zimmer A."/>
            <person name="Hide W."/>
            <person name="Bult C."/>
            <person name="Grimmond S.M."/>
            <person name="Teasdale R.D."/>
            <person name="Liu E.T."/>
            <person name="Brusic V."/>
            <person name="Quackenbush J."/>
            <person name="Wahlestedt C."/>
            <person name="Mattick J.S."/>
            <person name="Hume D.A."/>
            <person name="Kai C."/>
            <person name="Sasaki D."/>
            <person name="Tomaru Y."/>
            <person name="Fukuda S."/>
            <person name="Kanamori-Katayama M."/>
            <person name="Suzuki M."/>
            <person name="Aoki J."/>
            <person name="Arakawa T."/>
            <person name="Iida J."/>
            <person name="Imamura K."/>
            <person name="Itoh M."/>
            <person name="Kato T."/>
            <person name="Kawaji H."/>
            <person name="Kawagashira N."/>
            <person name="Kawashima T."/>
            <person name="Kojima M."/>
            <person name="Kondo S."/>
            <person name="Konno H."/>
            <person name="Nakano K."/>
            <person name="Ninomiya N."/>
            <person name="Nishio T."/>
            <person name="Okada M."/>
            <person name="Plessy C."/>
            <person name="Shibata K."/>
            <person name="Shiraki T."/>
            <person name="Suzuki S."/>
            <person name="Tagami M."/>
            <person name="Waki K."/>
            <person name="Watahiki A."/>
            <person name="Okamura-Oho Y."/>
            <person name="Suzuki H."/>
            <person name="Kawai J."/>
            <person name="Hayashizaki Y."/>
        </authorList>
    </citation>
    <scope>NUCLEOTIDE SEQUENCE [LARGE SCALE MRNA]</scope>
    <source>
        <strain>C57BL/6J</strain>
        <tissue>Adipose tissue</tissue>
        <tissue>Liver</tissue>
    </source>
</reference>
<dbReference type="EC" id="1.1.1.209" evidence="3"/>
<dbReference type="EC" id="1.1.1.53" evidence="3"/>
<dbReference type="EC" id="1.1.1.105" evidence="3"/>
<dbReference type="EMBL" id="AF361479">
    <property type="protein sequence ID" value="AAN75755.1"/>
    <property type="molecule type" value="mRNA"/>
</dbReference>
<dbReference type="EMBL" id="AK050180">
    <property type="protein sequence ID" value="BAC34110.1"/>
    <property type="molecule type" value="mRNA"/>
</dbReference>
<dbReference type="EMBL" id="AK080914">
    <property type="protein sequence ID" value="BAC38075.1"/>
    <property type="molecule type" value="mRNA"/>
</dbReference>
<dbReference type="EMBL" id="AY936479">
    <property type="protein sequence ID" value="AAX33670.1"/>
    <property type="molecule type" value="mRNA"/>
</dbReference>
<dbReference type="CCDS" id="CCDS16091.1"/>
<dbReference type="RefSeq" id="NP_780721.1">
    <property type="nucleotide sequence ID" value="NM_175512.2"/>
</dbReference>
<dbReference type="SMR" id="Q58NB6"/>
<dbReference type="BioGRID" id="232314">
    <property type="interactions" value="1"/>
</dbReference>
<dbReference type="FunCoup" id="Q58NB6">
    <property type="interactions" value="382"/>
</dbReference>
<dbReference type="STRING" id="10090.ENSMUSP00000069631"/>
<dbReference type="PhosphoSitePlus" id="Q58NB6"/>
<dbReference type="PaxDb" id="10090-ENSMUSP00000069631"/>
<dbReference type="ProteomicsDB" id="279528"/>
<dbReference type="Pumba" id="Q58NB6"/>
<dbReference type="Antibodypedia" id="33805">
    <property type="antibodies" value="240 antibodies from 27 providers"/>
</dbReference>
<dbReference type="DNASU" id="241452"/>
<dbReference type="Ensembl" id="ENSMUST00000063690.4">
    <property type="protein sequence ID" value="ENSMUSP00000069631.4"/>
    <property type="gene ID" value="ENSMUSG00000027068.7"/>
</dbReference>
<dbReference type="GeneID" id="241452"/>
<dbReference type="KEGG" id="mmu:241452"/>
<dbReference type="UCSC" id="uc008jyb.1">
    <property type="organism name" value="mouse"/>
</dbReference>
<dbReference type="AGR" id="MGI:2442798"/>
<dbReference type="CTD" id="10170"/>
<dbReference type="MGI" id="MGI:2442798">
    <property type="gene designation" value="Dhrs9"/>
</dbReference>
<dbReference type="VEuPathDB" id="HostDB:ENSMUSG00000027068"/>
<dbReference type="eggNOG" id="KOG1610">
    <property type="taxonomic scope" value="Eukaryota"/>
</dbReference>
<dbReference type="GeneTree" id="ENSGT00940000158665"/>
<dbReference type="HOGENOM" id="CLU_010194_2_0_1"/>
<dbReference type="InParanoid" id="Q58NB6"/>
<dbReference type="OMA" id="PQTHYIA"/>
<dbReference type="OrthoDB" id="294295at2759"/>
<dbReference type="PhylomeDB" id="Q58NB6"/>
<dbReference type="TreeFam" id="TF325617"/>
<dbReference type="Reactome" id="R-MMU-2453902">
    <property type="pathway name" value="The canonical retinoid cycle in rods (twilight vision)"/>
</dbReference>
<dbReference type="Reactome" id="R-MMU-5365859">
    <property type="pathway name" value="RA biosynthesis pathway"/>
</dbReference>
<dbReference type="BioGRID-ORCS" id="241452">
    <property type="hits" value="1 hit in 79 CRISPR screens"/>
</dbReference>
<dbReference type="PRO" id="PR:Q58NB6"/>
<dbReference type="Proteomes" id="UP000000589">
    <property type="component" value="Chromosome 2"/>
</dbReference>
<dbReference type="RNAct" id="Q58NB6">
    <property type="molecule type" value="protein"/>
</dbReference>
<dbReference type="Bgee" id="ENSMUSG00000027068">
    <property type="expression patterns" value="Expressed in granulocyte and 27 other cell types or tissues"/>
</dbReference>
<dbReference type="ExpressionAtlas" id="Q58NB6">
    <property type="expression patterns" value="baseline and differential"/>
</dbReference>
<dbReference type="GO" id="GO:0005789">
    <property type="term" value="C:endoplasmic reticulum membrane"/>
    <property type="evidence" value="ECO:0000250"/>
    <property type="project" value="UniProtKB"/>
</dbReference>
<dbReference type="GO" id="GO:0004022">
    <property type="term" value="F:alcohol dehydrogenase (NAD+) activity"/>
    <property type="evidence" value="ECO:0000250"/>
    <property type="project" value="UniProtKB"/>
</dbReference>
<dbReference type="GO" id="GO:0004745">
    <property type="term" value="F:all-trans-retinol dehydrogenase (NAD+) activity"/>
    <property type="evidence" value="ECO:0000250"/>
    <property type="project" value="UniProtKB"/>
</dbReference>
<dbReference type="GO" id="GO:0047044">
    <property type="term" value="F:androstan-3-alpha,17-beta-diol dehydrogenase (NAD+) activity"/>
    <property type="evidence" value="ECO:0000250"/>
    <property type="project" value="UniProtKB"/>
</dbReference>
<dbReference type="GO" id="GO:0047023">
    <property type="term" value="F:androsterone dehydrogenase [NAD(P)+] activity"/>
    <property type="evidence" value="ECO:0000250"/>
    <property type="project" value="UniProtKB"/>
</dbReference>
<dbReference type="GO" id="GO:0047035">
    <property type="term" value="F:testosterone dehydrogenase (NAD+) activity"/>
    <property type="evidence" value="ECO:0000250"/>
    <property type="project" value="UniProtKB"/>
</dbReference>
<dbReference type="GO" id="GO:0042904">
    <property type="term" value="P:9-cis-retinoic acid biosynthetic process"/>
    <property type="evidence" value="ECO:0000250"/>
    <property type="project" value="UniProtKB"/>
</dbReference>
<dbReference type="GO" id="GO:0008209">
    <property type="term" value="P:androgen metabolic process"/>
    <property type="evidence" value="ECO:0007669"/>
    <property type="project" value="Ensembl"/>
</dbReference>
<dbReference type="GO" id="GO:0042448">
    <property type="term" value="P:progesterone metabolic process"/>
    <property type="evidence" value="ECO:0007669"/>
    <property type="project" value="Ensembl"/>
</dbReference>
<dbReference type="CDD" id="cd09805">
    <property type="entry name" value="type2_17beta_HSD-like_SDR_c"/>
    <property type="match status" value="1"/>
</dbReference>
<dbReference type="FunFam" id="3.40.50.720:FF:000074">
    <property type="entry name" value="Retinol dehydrogenase type 1"/>
    <property type="match status" value="1"/>
</dbReference>
<dbReference type="Gene3D" id="3.40.50.720">
    <property type="entry name" value="NAD(P)-binding Rossmann-like Domain"/>
    <property type="match status" value="1"/>
</dbReference>
<dbReference type="InterPro" id="IPR036291">
    <property type="entry name" value="NAD(P)-bd_dom_sf"/>
</dbReference>
<dbReference type="InterPro" id="IPR002347">
    <property type="entry name" value="SDR_fam"/>
</dbReference>
<dbReference type="PANTHER" id="PTHR43313:SF15">
    <property type="entry name" value="DEHYDROGENASE_REDUCTASE SDR FAMILY MEMBER 9"/>
    <property type="match status" value="1"/>
</dbReference>
<dbReference type="PANTHER" id="PTHR43313">
    <property type="entry name" value="SHORT-CHAIN DEHYDROGENASE/REDUCTASE FAMILY 9C"/>
    <property type="match status" value="1"/>
</dbReference>
<dbReference type="Pfam" id="PF00106">
    <property type="entry name" value="adh_short"/>
    <property type="match status" value="1"/>
</dbReference>
<dbReference type="PRINTS" id="PR00081">
    <property type="entry name" value="GDHRDH"/>
</dbReference>
<dbReference type="PRINTS" id="PR00080">
    <property type="entry name" value="SDRFAMILY"/>
</dbReference>
<dbReference type="SUPFAM" id="SSF51735">
    <property type="entry name" value="NAD(P)-binding Rossmann-fold domains"/>
    <property type="match status" value="1"/>
</dbReference>
<gene>
    <name type="primary">Dhrs9</name>
</gene>
<proteinExistence type="evidence at transcript level"/>
<organism>
    <name type="scientific">Mus musculus</name>
    <name type="common">Mouse</name>
    <dbReference type="NCBI Taxonomy" id="10090"/>
    <lineage>
        <taxon>Eukaryota</taxon>
        <taxon>Metazoa</taxon>
        <taxon>Chordata</taxon>
        <taxon>Craniata</taxon>
        <taxon>Vertebrata</taxon>
        <taxon>Euteleostomi</taxon>
        <taxon>Mammalia</taxon>
        <taxon>Eutheria</taxon>
        <taxon>Euarchontoglires</taxon>
        <taxon>Glires</taxon>
        <taxon>Rodentia</taxon>
        <taxon>Myomorpha</taxon>
        <taxon>Muroidea</taxon>
        <taxon>Muridae</taxon>
        <taxon>Murinae</taxon>
        <taxon>Mus</taxon>
        <taxon>Mus</taxon>
    </lineage>
</organism>
<keyword id="KW-0256">Endoplasmic reticulum</keyword>
<keyword id="KW-0443">Lipid metabolism</keyword>
<keyword id="KW-0472">Membrane</keyword>
<keyword id="KW-0492">Microsome</keyword>
<keyword id="KW-0520">NAD</keyword>
<keyword id="KW-0521">NADP</keyword>
<keyword id="KW-0560">Oxidoreductase</keyword>
<keyword id="KW-1185">Reference proteome</keyword>
<keyword id="KW-0732">Signal</keyword>
<keyword id="KW-0753">Steroid metabolism</keyword>
<accession>Q58NB6</accession>
<accession>Q8BGC7</accession>
<protein>
    <recommendedName>
        <fullName>Dehydrogenase/reductase SDR family member 9</fullName>
        <ecNumber evidence="3">1.1.1.209</ecNumber>
        <ecNumber evidence="3">1.1.1.53</ecNumber>
    </recommendedName>
    <alternativeName>
        <fullName>3-alpha hydroxysteroid dehydrogenase</fullName>
        <shortName>3-alpha-HSD</shortName>
    </alternativeName>
    <alternativeName>
        <fullName>Retinol dehydrogenase</fullName>
        <ecNumber evidence="3">1.1.1.105</ecNumber>
    </alternativeName>
    <alternativeName>
        <fullName>Short-chain dehydrogenase/reductase retSDR8</fullName>
    </alternativeName>
</protein>
<sequence>MLFWLLALLFLCAFLWNYKGQLKIADIADKYVFITGCDTGFGNLAARTFDKKGFRVIAACLTESGSAALKAKTSERLHTVLLDVTDPENVKKTAQWVKSHVGEKGLWGLINNAGVLGVLAPTDWLTVDDYREPIEVNLFGLINVTLNMLPLVKKARGRVINVSSIGGRLAFGGGGYTPSKYAVEGFNDSLRRDMKAFGVHVSCIEPGLFKTELADPIKTTEKKLAIWKHLSPDIKQQYGEGYIEKSLHRLKSNTSSVNLDLSLVVGCMDHALTSLFPKTRYIAGKDAKTFWIPLSHMPAVLQDFLLLKQKVELANPKAV</sequence>
<name>DHRS9_MOUSE</name>
<feature type="signal peptide" evidence="4">
    <location>
        <begin position="1"/>
        <end position="20"/>
    </location>
</feature>
<feature type="chain" id="PRO_0000042618" description="Dehydrogenase/reductase SDR family member 9">
    <location>
        <begin position="21"/>
        <end position="319"/>
    </location>
</feature>
<feature type="active site" description="Proton acceptor" evidence="3">
    <location>
        <position position="176"/>
    </location>
</feature>
<feature type="binding site" evidence="1">
    <location>
        <begin position="34"/>
        <end position="58"/>
    </location>
    <ligand>
        <name>NAD(+)</name>
        <dbReference type="ChEBI" id="CHEBI:57540"/>
    </ligand>
</feature>
<feature type="binding site" evidence="1">
    <location>
        <position position="83"/>
    </location>
    <ligand>
        <name>NAD(+)</name>
        <dbReference type="ChEBI" id="CHEBI:57540"/>
    </ligand>
</feature>
<feature type="binding site" evidence="1">
    <location>
        <position position="164"/>
    </location>
    <ligand>
        <name>substrate</name>
    </ligand>
</feature>
<feature type="binding site" evidence="1">
    <location>
        <position position="180"/>
    </location>
    <ligand>
        <name>NAD(+)</name>
        <dbReference type="ChEBI" id="CHEBI:57540"/>
    </ligand>
</feature>
<feature type="sequence conflict" description="In Ref. 2; AAX33670." evidence="5" ref="2">
    <original>FWL</original>
    <variation>LWV</variation>
    <location>
        <begin position="3"/>
        <end position="5"/>
    </location>
</feature>
<feature type="sequence conflict" description="In Ref. 2; AAX33670." evidence="5" ref="2">
    <original>I</original>
    <variation>L</variation>
    <location>
        <position position="292"/>
    </location>
</feature>
<feature type="sequence conflict" description="In Ref. 2; AAX33670." evidence="5" ref="2">
    <original>K</original>
    <variation>Q</variation>
    <location>
        <position position="317"/>
    </location>
</feature>
<comment type="function">
    <text evidence="2 3">3-alpha-hydroxysteroid dehydrogenase that converts 3-alpha-tetrahydroprogesterone (allopregnanolone) to dihydroxyprogesterone and 3-alpha-androstanediol to dihydroxyprogesterone. Also plays a role in the biosynthesis of retinoic acid. Can utilize both NADH and NADPH.</text>
</comment>
<comment type="catalytic activity">
    <reaction evidence="3">
        <text>3beta-hydroxy-5alpha-pregnane-20-one + NAD(+) = 5alpha-pregnane-3,20-dione + NADH + H(+)</text>
        <dbReference type="Rhea" id="RHEA:41988"/>
        <dbReference type="ChEBI" id="CHEBI:11909"/>
        <dbReference type="ChEBI" id="CHEBI:15378"/>
        <dbReference type="ChEBI" id="CHEBI:28952"/>
        <dbReference type="ChEBI" id="CHEBI:57540"/>
        <dbReference type="ChEBI" id="CHEBI:57945"/>
    </reaction>
</comment>
<comment type="catalytic activity">
    <reaction evidence="3">
        <text>17beta-hydroxy-5alpha-androstan-3-one + NAD(+) = 5alpha-androstan-3,17-dione + NADH + H(+)</text>
        <dbReference type="Rhea" id="RHEA:41992"/>
        <dbReference type="ChEBI" id="CHEBI:15378"/>
        <dbReference type="ChEBI" id="CHEBI:15994"/>
        <dbReference type="ChEBI" id="CHEBI:16330"/>
        <dbReference type="ChEBI" id="CHEBI:57540"/>
        <dbReference type="ChEBI" id="CHEBI:57945"/>
    </reaction>
</comment>
<comment type="catalytic activity">
    <reaction evidence="3">
        <text>androsterone + NAD(+) = 5alpha-androstan-3,17-dione + NADH + H(+)</text>
        <dbReference type="Rhea" id="RHEA:20381"/>
        <dbReference type="ChEBI" id="CHEBI:15378"/>
        <dbReference type="ChEBI" id="CHEBI:15994"/>
        <dbReference type="ChEBI" id="CHEBI:16032"/>
        <dbReference type="ChEBI" id="CHEBI:57540"/>
        <dbReference type="ChEBI" id="CHEBI:57945"/>
        <dbReference type="EC" id="1.1.1.209"/>
    </reaction>
</comment>
<comment type="catalytic activity">
    <reaction evidence="3">
        <text>5alpha-androstane-3alpha,17beta-diol + NAD(+) = 17beta-hydroxy-5alpha-androstan-3-one + NADH + H(+)</text>
        <dbReference type="Rhea" id="RHEA:42004"/>
        <dbReference type="ChEBI" id="CHEBI:15378"/>
        <dbReference type="ChEBI" id="CHEBI:16330"/>
        <dbReference type="ChEBI" id="CHEBI:36713"/>
        <dbReference type="ChEBI" id="CHEBI:57540"/>
        <dbReference type="ChEBI" id="CHEBI:57945"/>
        <dbReference type="EC" id="1.1.1.53"/>
    </reaction>
</comment>
<comment type="catalytic activity">
    <reaction evidence="3">
        <text>all-trans-retinol + NAD(+) = all-trans-retinal + NADH + H(+)</text>
        <dbReference type="Rhea" id="RHEA:21284"/>
        <dbReference type="ChEBI" id="CHEBI:15378"/>
        <dbReference type="ChEBI" id="CHEBI:17336"/>
        <dbReference type="ChEBI" id="CHEBI:17898"/>
        <dbReference type="ChEBI" id="CHEBI:57540"/>
        <dbReference type="ChEBI" id="CHEBI:57945"/>
        <dbReference type="EC" id="1.1.1.105"/>
    </reaction>
</comment>
<comment type="catalytic activity">
    <reaction evidence="3">
        <text>3alpha-hydroxy-5alpha-pregnan-20-one + NAD(+) = 5alpha-pregnane-3,20-dione + NADH + H(+)</text>
        <dbReference type="Rhea" id="RHEA:41980"/>
        <dbReference type="ChEBI" id="CHEBI:15378"/>
        <dbReference type="ChEBI" id="CHEBI:28952"/>
        <dbReference type="ChEBI" id="CHEBI:50169"/>
        <dbReference type="ChEBI" id="CHEBI:57540"/>
        <dbReference type="ChEBI" id="CHEBI:57945"/>
    </reaction>
</comment>
<comment type="subunit">
    <text evidence="1">Homotetramer.</text>
</comment>
<comment type="subcellular location">
    <subcellularLocation>
        <location evidence="3">Microsome membrane</location>
    </subcellularLocation>
    <subcellularLocation>
        <location evidence="3">Endoplasmic reticulum membrane</location>
    </subcellularLocation>
</comment>
<comment type="similarity">
    <text evidence="5">Belongs to the short-chain dehydrogenases/reductases (SDR) family.</text>
</comment>